<name>PIRC2_BOVIN</name>
<protein>
    <recommendedName>
        <fullName>Piercer of microtubule wall 2 protein</fullName>
    </recommendedName>
</protein>
<comment type="function">
    <text evidence="2 3">Microtubule inner protein involved in the attachment of outer dynein arms (ODAs) to dynein-decorated doublet microtubules (DMTs) in cilia axoneme, which is required for motile cilia beating.</text>
</comment>
<comment type="subunit">
    <text evidence="2 3">Microtubule inner protein component of sperm flagellar doublet microtubules (PubMed:37327785). Interacts with CFAP53, ODAD1 and ODAD3; the interactions link the outer dynein arms docking complex (ODA-DC) to the internal microtubule inner proteins (MIP) in cilium axoneme (PubMed:34715025).</text>
</comment>
<comment type="subcellular location">
    <subcellularLocation>
        <location evidence="2">Cytoplasm</location>
        <location evidence="2">Cytoskeleton</location>
        <location evidence="2">Cilium axoneme</location>
    </subcellularLocation>
    <subcellularLocation>
        <location evidence="3">Cytoplasm</location>
        <location evidence="3">Cytoskeleton</location>
        <location evidence="3">Flagellum axoneme</location>
    </subcellularLocation>
</comment>
<comment type="tissue specificity">
    <text evidence="2">Expressed in trachea multiciliated cells.</text>
</comment>
<comment type="similarity">
    <text evidence="4">Belongs to the PIERCE2 family.</text>
</comment>
<proteinExistence type="evidence at protein level"/>
<evidence type="ECO:0000256" key="1">
    <source>
        <dbReference type="SAM" id="MobiDB-lite"/>
    </source>
</evidence>
<evidence type="ECO:0000269" key="2">
    <source>
    </source>
</evidence>
<evidence type="ECO:0000269" key="3">
    <source>
    </source>
</evidence>
<evidence type="ECO:0000305" key="4"/>
<evidence type="ECO:0000312" key="5">
    <source>
        <dbReference type="Proteomes" id="UP000009136"/>
    </source>
</evidence>
<evidence type="ECO:0000312" key="6">
    <source>
        <dbReference type="VGNC" id="VGNC:108125"/>
    </source>
</evidence>
<evidence type="ECO:0007744" key="7">
    <source>
        <dbReference type="PDB" id="7RRO"/>
    </source>
</evidence>
<evidence type="ECO:0007744" key="8">
    <source>
        <dbReference type="PDB" id="8OTZ"/>
    </source>
</evidence>
<keyword id="KW-0002">3D-structure</keyword>
<keyword id="KW-0966">Cell projection</keyword>
<keyword id="KW-0969">Cilium</keyword>
<keyword id="KW-0963">Cytoplasm</keyword>
<keyword id="KW-0206">Cytoskeleton</keyword>
<keyword id="KW-0282">Flagellum</keyword>
<keyword id="KW-1185">Reference proteome</keyword>
<organism evidence="5">
    <name type="scientific">Bos taurus</name>
    <name type="common">Bovine</name>
    <dbReference type="NCBI Taxonomy" id="9913"/>
    <lineage>
        <taxon>Eukaryota</taxon>
        <taxon>Metazoa</taxon>
        <taxon>Chordata</taxon>
        <taxon>Craniata</taxon>
        <taxon>Vertebrata</taxon>
        <taxon>Euteleostomi</taxon>
        <taxon>Mammalia</taxon>
        <taxon>Eutheria</taxon>
        <taxon>Laurasiatheria</taxon>
        <taxon>Artiodactyla</taxon>
        <taxon>Ruminantia</taxon>
        <taxon>Pecora</taxon>
        <taxon>Bovidae</taxon>
        <taxon>Bovinae</taxon>
        <taxon>Bos</taxon>
    </lineage>
</organism>
<sequence>MTECDWEKKSTSASNSDTEMKPELPPCVNPGNPVFSCMLDPKTLHTTTSLSKPKMIMYKTNSSNYGEFLPMPQFFPCYYTPREQVFSSHIRATGFYQNNTLNTAPDRTRTLDFPNFQHTL</sequence>
<gene>
    <name type="primary">PIERCE2</name>
    <name evidence="6" type="synonym">C10H15orf65</name>
    <name type="synonym">C15orf65</name>
</gene>
<accession>A0A3Q1LFK7</accession>
<feature type="chain" id="PRO_0000455516" description="Piercer of microtubule wall 2 protein">
    <location>
        <begin position="1"/>
        <end position="120"/>
    </location>
</feature>
<feature type="region of interest" description="Disordered" evidence="1">
    <location>
        <begin position="1"/>
        <end position="25"/>
    </location>
</feature>
<feature type="compositionally biased region" description="Basic and acidic residues" evidence="1">
    <location>
        <begin position="1"/>
        <end position="10"/>
    </location>
</feature>
<dbReference type="RefSeq" id="XP_059746829.1">
    <property type="nucleotide sequence ID" value="XM_059890846.1"/>
</dbReference>
<dbReference type="PDB" id="7RRO">
    <property type="method" value="EM"/>
    <property type="resolution" value="3.40 A"/>
    <property type="chains" value="G=1-120"/>
</dbReference>
<dbReference type="PDB" id="8OTZ">
    <property type="method" value="EM"/>
    <property type="resolution" value="3.60 A"/>
    <property type="chains" value="Bh=1-120"/>
</dbReference>
<dbReference type="PDB" id="9CPB">
    <property type="method" value="EM"/>
    <property type="resolution" value="3.52 A"/>
    <property type="chains" value="4Y=1-120"/>
</dbReference>
<dbReference type="PDBsum" id="7RRO"/>
<dbReference type="PDBsum" id="8OTZ"/>
<dbReference type="PDBsum" id="9CPB"/>
<dbReference type="EMDB" id="EMD-17187"/>
<dbReference type="EMDB" id="EMD-24664"/>
<dbReference type="EMDB" id="EMD-45801"/>
<dbReference type="EMDB" id="EMD-50664"/>
<dbReference type="SMR" id="A0A3Q1LFK7"/>
<dbReference type="FunCoup" id="A0A3Q1LFK7">
    <property type="interactions" value="136"/>
</dbReference>
<dbReference type="STRING" id="9913.ENSBTAP00000056977"/>
<dbReference type="Ensembl" id="ENSBTAT00000084534.1">
    <property type="protein sequence ID" value="ENSBTAP00000056977.1"/>
    <property type="gene ID" value="ENSBTAG00000051675.1"/>
</dbReference>
<dbReference type="GeneID" id="100297185"/>
<dbReference type="VEuPathDB" id="HostDB:ENSBTAG00000051675"/>
<dbReference type="VGNC" id="VGNC:108125">
    <property type="gene designation" value="PIERCE2"/>
</dbReference>
<dbReference type="GeneTree" id="ENSGT00940000154745"/>
<dbReference type="InParanoid" id="A0A3Q1LFK7"/>
<dbReference type="OMA" id="QFLPCNY"/>
<dbReference type="Proteomes" id="UP000009136">
    <property type="component" value="Chromosome 10"/>
</dbReference>
<dbReference type="Bgee" id="ENSBTAG00000051675">
    <property type="expression patterns" value="Expressed in spermatid and 104 other cell types or tissues"/>
</dbReference>
<dbReference type="GO" id="GO:0160111">
    <property type="term" value="C:axonemal A tubule inner sheath"/>
    <property type="evidence" value="ECO:0000250"/>
    <property type="project" value="UniProtKB"/>
</dbReference>
<dbReference type="GO" id="GO:0005879">
    <property type="term" value="C:axonemal microtubule"/>
    <property type="evidence" value="ECO:0000314"/>
    <property type="project" value="UniProtKB"/>
</dbReference>
<dbReference type="GO" id="GO:0036126">
    <property type="term" value="C:sperm flagellum"/>
    <property type="evidence" value="ECO:0000250"/>
    <property type="project" value="UniProtKB"/>
</dbReference>
<dbReference type="GO" id="GO:0035082">
    <property type="term" value="P:axoneme assembly"/>
    <property type="evidence" value="ECO:0000250"/>
    <property type="project" value="UniProtKB"/>
</dbReference>
<dbReference type="GO" id="GO:0003341">
    <property type="term" value="P:cilium movement"/>
    <property type="evidence" value="ECO:0000250"/>
    <property type="project" value="UniProtKB"/>
</dbReference>
<dbReference type="GO" id="GO:0007368">
    <property type="term" value="P:determination of left/right symmetry"/>
    <property type="evidence" value="ECO:0000250"/>
    <property type="project" value="UniProtKB"/>
</dbReference>
<dbReference type="GO" id="GO:0030317">
    <property type="term" value="P:flagellated sperm motility"/>
    <property type="evidence" value="ECO:0000250"/>
    <property type="project" value="UniProtKB"/>
</dbReference>
<dbReference type="InterPro" id="IPR026507">
    <property type="entry name" value="PIRC1/2"/>
</dbReference>
<dbReference type="PANTHER" id="PTHR20899">
    <property type="entry name" value="PIERCE HOMOLOG"/>
    <property type="match status" value="1"/>
</dbReference>
<dbReference type="PANTHER" id="PTHR20899:SF4">
    <property type="entry name" value="PIERCER OF MICROTUBULE WALL 2 PROTEIN"/>
    <property type="match status" value="1"/>
</dbReference>
<dbReference type="Pfam" id="PF14892">
    <property type="entry name" value="PIRC1_2"/>
    <property type="match status" value="1"/>
</dbReference>
<reference evidence="5" key="1">
    <citation type="submission" date="2018-03" db="EMBL/GenBank/DDBJ databases">
        <title>ARS-UCD1.2.</title>
        <authorList>
            <person name="Rosen B.D."/>
            <person name="Bickhart D.M."/>
            <person name="Koren S."/>
            <person name="Schnabel R.D."/>
            <person name="Hall R."/>
            <person name="Zimin A."/>
            <person name="Dreischer C."/>
            <person name="Schultheiss S."/>
            <person name="Schroeder S.G."/>
            <person name="Elsik C.G."/>
            <person name="Couldrey C."/>
            <person name="Liu G.E."/>
            <person name="Van Tassell C.P."/>
            <person name="Phillippy A.M."/>
            <person name="Smith T.P.L."/>
            <person name="Medrano J.F."/>
        </authorList>
    </citation>
    <scope>NUCLEOTIDE SEQUENCE [LARGE SCALE GENOMIC DNA]</scope>
    <source>
        <strain evidence="5">Hereford</strain>
    </source>
</reference>
<reference key="2">
    <citation type="submission" date="2019-01" db="UniProtKB">
        <authorList>
            <consortium name="Ensembl"/>
        </authorList>
    </citation>
    <scope>IDENTIFICATION</scope>
    <source>
        <strain>Hereford</strain>
    </source>
</reference>
<reference evidence="7" key="3">
    <citation type="journal article" date="2021" name="Cell">
        <title>De novo identification of mammalian ciliary motility proteins using cryo-EM.</title>
        <authorList>
            <person name="Gui M."/>
            <person name="Farley H."/>
            <person name="Anujan P."/>
            <person name="Anderson J.R."/>
            <person name="Maxwell D.W."/>
            <person name="Whitchurch J.B."/>
            <person name="Botsch J.J."/>
            <person name="Qiu T."/>
            <person name="Meleppattu S."/>
            <person name="Singh S.K."/>
            <person name="Zhang Q."/>
            <person name="Thompson J."/>
            <person name="Lucas J.S."/>
            <person name="Bingle C.D."/>
            <person name="Norris D.P."/>
            <person name="Roy S."/>
            <person name="Brown A."/>
        </authorList>
    </citation>
    <scope>STRUCTURE BY ELECTRON MICROSCOPY (3.40 ANGSTROMS)</scope>
    <scope>TISSUE SPECIFICITY</scope>
    <scope>SUBCELLULAR LOCATION</scope>
    <scope>INTERACTION WITH CFAP53; ODAD1 AND ODAD3</scope>
    <scope>FUNCTION</scope>
</reference>
<reference evidence="8" key="4">
    <citation type="journal article" date="2023" name="Cell">
        <title>Structural specializations of the sperm tail.</title>
        <authorList>
            <person name="Leung M.R."/>
            <person name="Zeng J."/>
            <person name="Wang X."/>
            <person name="Roelofs M.C."/>
            <person name="Huang W."/>
            <person name="Zenezini Chiozzi R."/>
            <person name="Hevler J.F."/>
            <person name="Heck A.J.R."/>
            <person name="Dutcher S.K."/>
            <person name="Brown A."/>
            <person name="Zhang R."/>
            <person name="Zeev-Ben-Mordehai T."/>
        </authorList>
    </citation>
    <scope>STRUCTURE BY ELECTRON MICROSCOPY (3.60 ANGSTROMS)</scope>
    <scope>FUNCTION</scope>
    <scope>SUBUNIT</scope>
    <scope>SUBCELLULAR LOCATION</scope>
</reference>